<name>DSC2_MOUSE</name>
<proteinExistence type="evidence at protein level"/>
<evidence type="ECO:0000250" key="1"/>
<evidence type="ECO:0000250" key="2">
    <source>
        <dbReference type="UniProtKB" id="Q02487"/>
    </source>
</evidence>
<evidence type="ECO:0000255" key="3"/>
<evidence type="ECO:0000255" key="4">
    <source>
        <dbReference type="PROSITE-ProRule" id="PRU00043"/>
    </source>
</evidence>
<evidence type="ECO:0000269" key="5">
    <source>
    </source>
</evidence>
<evidence type="ECO:0000269" key="6">
    <source>
    </source>
</evidence>
<evidence type="ECO:0000269" key="7">
    <source>
    </source>
</evidence>
<evidence type="ECO:0000269" key="8">
    <source>
    </source>
</evidence>
<evidence type="ECO:0000269" key="9">
    <source>
    </source>
</evidence>
<evidence type="ECO:0000269" key="10">
    <source>
    </source>
</evidence>
<evidence type="ECO:0000305" key="11"/>
<reference key="1">
    <citation type="journal article" date="1994" name="Mol. Membr. Biol.">
        <title>Cloning, sequence analysis and expression pattern of mouse desmocollin 2 (DSC2), a cadherin-like adhesion molecule.</title>
        <authorList>
            <person name="Lorimer J.E."/>
            <person name="Hall L.S."/>
            <person name="Clarke J.P."/>
            <person name="Collins J.E."/>
            <person name="Fleming T.P."/>
            <person name="Garrod D.R."/>
        </authorList>
    </citation>
    <scope>NUCLEOTIDE SEQUENCE [MRNA]</scope>
    <scope>TISSUE SPECIFICITY</scope>
    <source>
        <strain>C57BL/6J</strain>
        <tissue>Embryo</tissue>
    </source>
</reference>
<reference key="2">
    <citation type="journal article" date="1994" name="Genomics">
        <title>Mouse desmocollin (Dsc3) and desmoglein (Dsg1) genes are closely linked in the proximal region of chromosome 18.</title>
        <authorList>
            <person name="Buxton R.S."/>
            <person name="Wheeler G.N."/>
            <person name="Pidsley S.C."/>
            <person name="Marsden M.D."/>
            <person name="Adams M.J."/>
            <person name="Jenkins N.A."/>
            <person name="Gilbert D.J."/>
            <person name="Copeland N.G."/>
        </authorList>
    </citation>
    <scope>NUCLEOTIDE SEQUENCE [MRNA] OF 344-637</scope>
    <source>
        <strain>C57BL/6J</strain>
        <tissue>Embryo</tissue>
    </source>
</reference>
<reference key="3">
    <citation type="journal article" date="2010" name="Cell">
        <title>A tissue-specific atlas of mouse protein phosphorylation and expression.</title>
        <authorList>
            <person name="Huttlin E.L."/>
            <person name="Jedrychowski M.P."/>
            <person name="Elias J.E."/>
            <person name="Goswami T."/>
            <person name="Rad R."/>
            <person name="Beausoleil S.A."/>
            <person name="Villen J."/>
            <person name="Haas W."/>
            <person name="Sowa M.E."/>
            <person name="Gygi S.P."/>
        </authorList>
    </citation>
    <scope>IDENTIFICATION BY MASS SPECTROMETRY [LARGE SCALE ANALYSIS]</scope>
    <source>
        <tissue>Heart</tissue>
        <tissue>Liver</tissue>
    </source>
</reference>
<reference key="4">
    <citation type="journal article" date="2016" name="J. Invest. Dermatol.">
        <title>Growth Retardation, Loss of Desmosomal Adhesion, and Impaired Tight Junction Function Identify a Unique Role of Plakophilin 1 In Vivo.</title>
        <authorList>
            <person name="Rietscher K."/>
            <person name="Wolf A."/>
            <person name="Hause G."/>
            <person name="Rother A."/>
            <person name="Keil R."/>
            <person name="Magin T.M."/>
            <person name="Glass M."/>
            <person name="Niessen C.M."/>
            <person name="Hatzfeld M."/>
        </authorList>
    </citation>
    <scope>DEVELOPMENTAL STAGE</scope>
</reference>
<reference key="5">
    <citation type="journal article" date="2016" name="J. Invest. Dermatol.">
        <title>Desmoglein 3-Dependent Signaling Regulates Keratinocyte Migration and Wound Healing.</title>
        <authorList>
            <person name="Roetzer V."/>
            <person name="Hartlieb E."/>
            <person name="Winkler J."/>
            <person name="Walter E."/>
            <person name="Schlipp A."/>
            <person name="Sardy M."/>
            <person name="Spindler V."/>
            <person name="Waschke J."/>
        </authorList>
    </citation>
    <scope>FUNCTION</scope>
    <scope>INTERACTION WITH DSG3</scope>
</reference>
<reference key="6">
    <citation type="journal article" date="2020" name="Mol. Biol. Cell">
        <title>Desmocollin-2 promotes intestinal mucosal repair by controlling integrin-dependent cell adhesion and migration.</title>
        <authorList>
            <person name="Flemming S."/>
            <person name="Luissint A.C."/>
            <person name="Kusters D.H.M."/>
            <person name="Raya-Sandino A."/>
            <person name="Fan S."/>
            <person name="Zhou D.W."/>
            <person name="Hasegawa M."/>
            <person name="Garcia-Hernandez V."/>
            <person name="Garcia A.J."/>
            <person name="Parkos C.A."/>
            <person name="Nusrat A."/>
        </authorList>
    </citation>
    <scope>FUNCTION</scope>
    <scope>TISSUE SPECIFICITY</scope>
    <scope>DISRUPTION PHENOTYPE</scope>
</reference>
<reference key="7">
    <citation type="journal article" date="2021" name="Mol. Biol. Cell">
        <title>Regulation of intestinal epithelial intercellular adhesion and barrier function by desmosomal cadherin desmocollin-2.</title>
        <authorList>
            <person name="Raya-Sandino A."/>
            <person name="Luissint A.C."/>
            <person name="Kusters D.H.M."/>
            <person name="Narayanan V."/>
            <person name="Flemming S."/>
            <person name="Garcia-Hernandez V."/>
            <person name="Godsel L.M."/>
            <person name="Green K.J."/>
            <person name="Hagen S.J."/>
            <person name="Conway D.E."/>
            <person name="Parkos C.A."/>
            <person name="Nusrat A."/>
        </authorList>
    </citation>
    <scope>FUNCTION</scope>
    <scope>TISSUE SPECIFICITY</scope>
    <scope>DISRUPTION PHENOTYPE</scope>
</reference>
<reference key="8">
    <citation type="journal article" date="2024" name="Kidney Int.">
        <title>The role of desmoglein-2 in kidney disease.</title>
        <authorList>
            <person name="Xu T."/>
            <person name="Herkens L."/>
            <person name="Jia T."/>
            <person name="Klinkhammer B.M."/>
            <person name="Kant S."/>
            <person name="Krusche C.A."/>
            <person name="Buhl E.M."/>
            <person name="Hayat S."/>
            <person name="Floege J."/>
            <person name="Strnad P."/>
            <person name="Kramann R."/>
            <person name="Djudjaj S."/>
            <person name="Boor P."/>
        </authorList>
    </citation>
    <scope>SUBCELLULAR LOCATION</scope>
</reference>
<feature type="signal peptide" evidence="3">
    <location>
        <begin position="1"/>
        <end position="27"/>
    </location>
</feature>
<feature type="propeptide" id="PRO_0000003871" evidence="3">
    <location>
        <begin position="28"/>
        <end position="135"/>
    </location>
</feature>
<feature type="chain" id="PRO_0000003872" description="Desmocollin-2">
    <location>
        <begin position="136"/>
        <end position="902"/>
    </location>
</feature>
<feature type="topological domain" description="Extracellular" evidence="3">
    <location>
        <begin position="136"/>
        <end position="694"/>
    </location>
</feature>
<feature type="transmembrane region" description="Helical" evidence="3">
    <location>
        <begin position="695"/>
        <end position="715"/>
    </location>
</feature>
<feature type="topological domain" description="Cytoplasmic" evidence="3">
    <location>
        <begin position="716"/>
        <end position="902"/>
    </location>
</feature>
<feature type="domain" description="Cadherin 1" evidence="4">
    <location>
        <begin position="136"/>
        <end position="243"/>
    </location>
</feature>
<feature type="domain" description="Cadherin 2" evidence="4">
    <location>
        <begin position="244"/>
        <end position="355"/>
    </location>
</feature>
<feature type="domain" description="Cadherin 3" evidence="4">
    <location>
        <begin position="356"/>
        <end position="471"/>
    </location>
</feature>
<feature type="domain" description="Cadherin 4" evidence="4">
    <location>
        <begin position="472"/>
        <end position="579"/>
    </location>
</feature>
<feature type="domain" description="Cadherin 5" evidence="4">
    <location>
        <begin position="580"/>
        <end position="694"/>
    </location>
</feature>
<feature type="modified residue" description="Phosphoserine" evidence="2">
    <location>
        <position position="865"/>
    </location>
</feature>
<feature type="modified residue" description="Phosphoserine" evidence="2">
    <location>
        <position position="869"/>
    </location>
</feature>
<feature type="modified residue" description="Phosphoserine" evidence="2">
    <location>
        <position position="874"/>
    </location>
</feature>
<feature type="glycosylation site" description="N-linked (GlcNAc...) asparagine" evidence="3">
    <location>
        <position position="166"/>
    </location>
</feature>
<feature type="glycosylation site" description="N-linked (GlcNAc...) asparagine" evidence="3">
    <location>
        <position position="392"/>
    </location>
</feature>
<feature type="glycosylation site" description="N-linked (GlcNAc...) asparagine" evidence="3">
    <location>
        <position position="546"/>
    </location>
</feature>
<feature type="glycosylation site" description="N-linked (GlcNAc...) asparagine" evidence="3">
    <location>
        <position position="629"/>
    </location>
</feature>
<feature type="splice variant" id="VSP_000659" description="In isoform 2B." evidence="11">
    <original>KVQFCHTDDNQ</original>
    <variation>ETIRGHTLIKN</variation>
    <location>
        <begin position="838"/>
        <end position="848"/>
    </location>
</feature>
<feature type="splice variant" id="VSP_000660" description="In isoform 2B." evidence="11">
    <location>
        <begin position="849"/>
        <end position="902"/>
    </location>
</feature>
<organism>
    <name type="scientific">Mus musculus</name>
    <name type="common">Mouse</name>
    <dbReference type="NCBI Taxonomy" id="10090"/>
    <lineage>
        <taxon>Eukaryota</taxon>
        <taxon>Metazoa</taxon>
        <taxon>Chordata</taxon>
        <taxon>Craniata</taxon>
        <taxon>Vertebrata</taxon>
        <taxon>Euteleostomi</taxon>
        <taxon>Mammalia</taxon>
        <taxon>Eutheria</taxon>
        <taxon>Euarchontoglires</taxon>
        <taxon>Glires</taxon>
        <taxon>Rodentia</taxon>
        <taxon>Myomorpha</taxon>
        <taxon>Muroidea</taxon>
        <taxon>Muridae</taxon>
        <taxon>Murinae</taxon>
        <taxon>Mus</taxon>
        <taxon>Mus</taxon>
    </lineage>
</organism>
<gene>
    <name type="primary">Dsc2</name>
    <name type="synonym">Dsc3</name>
</gene>
<sequence length="902" mass="99961">MAAVGSMRSGSPAFGLGHLLTLAILALASDACKEVVLQVPSELPAEKFVGRVNLMDCLKSADIVHLSDPDFQVLEDGSVYTTSSVVLSSGQRSFTIWLFSTDSQEEREISVHLEGPVEVLNKRPHTEKVLSRAKRRWAPIPCSMLENSLGPFPLFLQQIQSDTAQNYTIYYSIRGPGVDKEPLNLFYVERDTGNLYCTGRVDREQYESFELTAFATTPDGYTPEYPLPLLIKIEDENDNYPIFTQKLYSFTVQENSRIGSIVGEVCATDLDEPDTMHTRLRYSILEQSPSPPMLFTMHPSTGVITTTSAQLDRELIDKYQLLIKVQDMDGQYFGLHTTAKCIITIEDVNDNLPTFTRTTYVTSVEENTVNVEILRLTVQDKDLVNSPNWRANYTILKGNENGNFKIVTDPKTNEGILCVIKPLDYEERQQVTLQIGVVNEAPYTREASSKSPMSTATVTVTVTNQDEGPECIPPMQTVRIQENVPVGTRNDGYKAYDPETRSSSGIRYRKLSDPRGWVTVNEDSGSITIFRALDREAETVRNGIYNITVLALDADGRSCTGTLGIILEDVNDNGPFIPKQTVVICKATMSSAEIVAVDLDDPVNGPPFDFSLESSDSEVQRMWRLTRINDTAARLSYQNDPSFGSYAVPIRVTDRLGLSSVTTLNVLVCDCITESDCTLRSGERTGYADVRLGPWAILAILLGIALLFCILFTLVCSVSRASKQQKILPDDLAQQNLIVSNTEAPGDDKVYSTNGLTTQTMGASGQTAFTTMGTGVKSGGQETIEMVKGGQQTLDSRRGAGYHHHTLDPCRGGHVEVDNYRHTYSEWYNFIQPRLGDKVQFCHTDDNQKLAQDYVLTYNYEGKGSAAGSVGCCSDLQEEDGLEFLDHLEPKFRTLAEVCAKR</sequence>
<accession>P55292</accession>
<accession>Q64734</accession>
<dbReference type="EMBL" id="L33779">
    <property type="protein sequence ID" value="AAA79177.1"/>
    <property type="molecule type" value="mRNA"/>
</dbReference>
<dbReference type="EMBL" id="L33779">
    <property type="protein sequence ID" value="AAA79176.1"/>
    <property type="molecule type" value="mRNA"/>
</dbReference>
<dbReference type="EMBL" id="X73885">
    <property type="protein sequence ID" value="CAA52089.1"/>
    <property type="molecule type" value="mRNA"/>
</dbReference>
<dbReference type="CCDS" id="CCDS29077.1">
    <molecule id="P55292-2"/>
</dbReference>
<dbReference type="CCDS" id="CCDS84361.1">
    <molecule id="P55292-1"/>
</dbReference>
<dbReference type="PIR" id="A54742">
    <property type="entry name" value="A54742"/>
</dbReference>
<dbReference type="RefSeq" id="NP_001304294.1">
    <molecule id="P55292-1"/>
    <property type="nucleotide sequence ID" value="NM_001317365.1"/>
</dbReference>
<dbReference type="RefSeq" id="NP_038533.1">
    <molecule id="P55292-2"/>
    <property type="nucleotide sequence ID" value="NM_013505.4"/>
</dbReference>
<dbReference type="SMR" id="P55292"/>
<dbReference type="BioGRID" id="199319">
    <property type="interactions" value="3"/>
</dbReference>
<dbReference type="FunCoup" id="P55292">
    <property type="interactions" value="199"/>
</dbReference>
<dbReference type="STRING" id="10090.ENSMUSP00000074702"/>
<dbReference type="GlyCosmos" id="P55292">
    <property type="glycosylation" value="4 sites, No reported glycans"/>
</dbReference>
<dbReference type="GlyGen" id="P55292">
    <property type="glycosylation" value="4 sites, 2 N-linked glycans (2 sites)"/>
</dbReference>
<dbReference type="iPTMnet" id="P55292"/>
<dbReference type="PhosphoSitePlus" id="P55292"/>
<dbReference type="SwissPalm" id="P55292"/>
<dbReference type="PaxDb" id="10090-ENSMUSP00000042905"/>
<dbReference type="PeptideAtlas" id="P55292"/>
<dbReference type="ProteomicsDB" id="277407">
    <molecule id="P55292-1"/>
</dbReference>
<dbReference type="ProteomicsDB" id="277408">
    <molecule id="P55292-2"/>
</dbReference>
<dbReference type="Antibodypedia" id="2782">
    <property type="antibodies" value="356 antibodies from 32 providers"/>
</dbReference>
<dbReference type="DNASU" id="13506"/>
<dbReference type="Ensembl" id="ENSMUST00000039247.11">
    <molecule id="P55292-2"/>
    <property type="protein sequence ID" value="ENSMUSP00000042905.5"/>
    <property type="gene ID" value="ENSMUSG00000024331.12"/>
</dbReference>
<dbReference type="Ensembl" id="ENSMUST00000075214.9">
    <molecule id="P55292-1"/>
    <property type="protein sequence ID" value="ENSMUSP00000074702.3"/>
    <property type="gene ID" value="ENSMUSG00000024331.12"/>
</dbReference>
<dbReference type="GeneID" id="13506"/>
<dbReference type="KEGG" id="mmu:13506"/>
<dbReference type="UCSC" id="uc008eec.1">
    <molecule id="P55292-1"/>
    <property type="organism name" value="mouse"/>
</dbReference>
<dbReference type="AGR" id="MGI:103221"/>
<dbReference type="CTD" id="1824"/>
<dbReference type="MGI" id="MGI:103221">
    <property type="gene designation" value="Dsc2"/>
</dbReference>
<dbReference type="VEuPathDB" id="HostDB:ENSMUSG00000024331"/>
<dbReference type="eggNOG" id="KOG3594">
    <property type="taxonomic scope" value="Eukaryota"/>
</dbReference>
<dbReference type="GeneTree" id="ENSGT01030000234624"/>
<dbReference type="HOGENOM" id="CLU_005284_0_2_1"/>
<dbReference type="InParanoid" id="P55292"/>
<dbReference type="OMA" id="CIPVEDK"/>
<dbReference type="OrthoDB" id="6079678at2759"/>
<dbReference type="PhylomeDB" id="P55292"/>
<dbReference type="TreeFam" id="TF316817"/>
<dbReference type="Reactome" id="R-MMU-6805567">
    <property type="pathway name" value="Keratinization"/>
</dbReference>
<dbReference type="Reactome" id="R-MMU-6809371">
    <property type="pathway name" value="Formation of the cornified envelope"/>
</dbReference>
<dbReference type="BioGRID-ORCS" id="13506">
    <property type="hits" value="2 hits in 77 CRISPR screens"/>
</dbReference>
<dbReference type="ChiTaRS" id="Dsc2">
    <property type="organism name" value="mouse"/>
</dbReference>
<dbReference type="PRO" id="PR:P55292"/>
<dbReference type="Proteomes" id="UP000000589">
    <property type="component" value="Chromosome 18"/>
</dbReference>
<dbReference type="RNAct" id="P55292">
    <property type="molecule type" value="protein"/>
</dbReference>
<dbReference type="Bgee" id="ENSMUSG00000024331">
    <property type="expression patterns" value="Expressed in conjunctival fornix and 193 other cell types or tissues"/>
</dbReference>
<dbReference type="ExpressionAtlas" id="P55292">
    <property type="expression patterns" value="baseline and differential"/>
</dbReference>
<dbReference type="GO" id="GO:0005912">
    <property type="term" value="C:adherens junction"/>
    <property type="evidence" value="ECO:0000314"/>
    <property type="project" value="MGI"/>
</dbReference>
<dbReference type="GO" id="GO:0031410">
    <property type="term" value="C:cytoplasmic vesicle"/>
    <property type="evidence" value="ECO:0007669"/>
    <property type="project" value="Ensembl"/>
</dbReference>
<dbReference type="GO" id="GO:0030057">
    <property type="term" value="C:desmosome"/>
    <property type="evidence" value="ECO:0000314"/>
    <property type="project" value="UniProtKB"/>
</dbReference>
<dbReference type="GO" id="GO:0005783">
    <property type="term" value="C:endoplasmic reticulum"/>
    <property type="evidence" value="ECO:0007669"/>
    <property type="project" value="Ensembl"/>
</dbReference>
<dbReference type="GO" id="GO:0014704">
    <property type="term" value="C:intercalated disc"/>
    <property type="evidence" value="ECO:0007669"/>
    <property type="project" value="Ensembl"/>
</dbReference>
<dbReference type="GO" id="GO:0005886">
    <property type="term" value="C:plasma membrane"/>
    <property type="evidence" value="ECO:0007669"/>
    <property type="project" value="UniProtKB-SubCell"/>
</dbReference>
<dbReference type="GO" id="GO:0005509">
    <property type="term" value="F:calcium ion binding"/>
    <property type="evidence" value="ECO:0007669"/>
    <property type="project" value="InterPro"/>
</dbReference>
<dbReference type="GO" id="GO:0086073">
    <property type="term" value="P:bundle of His cell-Purkinje myocyte adhesion involved in cell communication"/>
    <property type="evidence" value="ECO:0007669"/>
    <property type="project" value="Ensembl"/>
</dbReference>
<dbReference type="GO" id="GO:0009267">
    <property type="term" value="P:cellular response to starvation"/>
    <property type="evidence" value="ECO:0000270"/>
    <property type="project" value="MGI"/>
</dbReference>
<dbReference type="GO" id="GO:0007156">
    <property type="term" value="P:homophilic cell adhesion via plasma membrane adhesion molecules"/>
    <property type="evidence" value="ECO:0007669"/>
    <property type="project" value="InterPro"/>
</dbReference>
<dbReference type="GO" id="GO:1900745">
    <property type="term" value="P:positive regulation of p38MAPK cascade"/>
    <property type="evidence" value="ECO:0000315"/>
    <property type="project" value="UniProtKB"/>
</dbReference>
<dbReference type="GO" id="GO:0086091">
    <property type="term" value="P:regulation of heart rate by cardiac conduction"/>
    <property type="evidence" value="ECO:0007669"/>
    <property type="project" value="Ensembl"/>
</dbReference>
<dbReference type="GO" id="GO:0098911">
    <property type="term" value="P:regulation of ventricular cardiac muscle cell action potential"/>
    <property type="evidence" value="ECO:0007669"/>
    <property type="project" value="Ensembl"/>
</dbReference>
<dbReference type="CDD" id="cd11304">
    <property type="entry name" value="Cadherin_repeat"/>
    <property type="match status" value="4"/>
</dbReference>
<dbReference type="FunFam" id="2.60.40.60:FF:000011">
    <property type="entry name" value="Cadherin 1"/>
    <property type="match status" value="1"/>
</dbReference>
<dbReference type="FunFam" id="2.60.40.60:FF:000019">
    <property type="entry name" value="Cadherin 2"/>
    <property type="match status" value="1"/>
</dbReference>
<dbReference type="FunFam" id="2.60.40.60:FF:000027">
    <property type="entry name" value="Cadherin 2"/>
    <property type="match status" value="1"/>
</dbReference>
<dbReference type="FunFam" id="2.60.40.60:FF:000031">
    <property type="entry name" value="Cadherin 3"/>
    <property type="match status" value="1"/>
</dbReference>
<dbReference type="FunFam" id="2.60.40.60:FF:000091">
    <property type="entry name" value="Desmocollin 1"/>
    <property type="match status" value="1"/>
</dbReference>
<dbReference type="FunFam" id="2.60.40.60:FF:000096">
    <property type="entry name" value="Desmocollin 2"/>
    <property type="match status" value="1"/>
</dbReference>
<dbReference type="FunFam" id="4.10.900.10:FF:000005">
    <property type="entry name" value="Desmocollin 2"/>
    <property type="match status" value="1"/>
</dbReference>
<dbReference type="Gene3D" id="2.60.40.60">
    <property type="entry name" value="Cadherins"/>
    <property type="match status" value="6"/>
</dbReference>
<dbReference type="Gene3D" id="4.10.900.10">
    <property type="entry name" value="TCF3-CBD (Catenin binding domain)"/>
    <property type="match status" value="1"/>
</dbReference>
<dbReference type="InterPro" id="IPR050971">
    <property type="entry name" value="Cadherin-domain_protein"/>
</dbReference>
<dbReference type="InterPro" id="IPR002126">
    <property type="entry name" value="Cadherin-like_dom"/>
</dbReference>
<dbReference type="InterPro" id="IPR015919">
    <property type="entry name" value="Cadherin-like_sf"/>
</dbReference>
<dbReference type="InterPro" id="IPR020894">
    <property type="entry name" value="Cadherin_CS"/>
</dbReference>
<dbReference type="InterPro" id="IPR014868">
    <property type="entry name" value="Cadherin_pro_dom"/>
</dbReference>
<dbReference type="InterPro" id="IPR000233">
    <property type="entry name" value="Cadherin_Y-type_LIR"/>
</dbReference>
<dbReference type="InterPro" id="IPR027397">
    <property type="entry name" value="Catenin-bd_sf"/>
</dbReference>
<dbReference type="InterPro" id="IPR009122">
    <property type="entry name" value="Desmosomal_cadherin"/>
</dbReference>
<dbReference type="PANTHER" id="PTHR24025:SF0">
    <property type="entry name" value="DESMOCOLLIN-2"/>
    <property type="match status" value="1"/>
</dbReference>
<dbReference type="PANTHER" id="PTHR24025">
    <property type="entry name" value="DESMOGLEIN FAMILY MEMBER"/>
    <property type="match status" value="1"/>
</dbReference>
<dbReference type="Pfam" id="PF01049">
    <property type="entry name" value="CADH_Y-type_LIR"/>
    <property type="match status" value="1"/>
</dbReference>
<dbReference type="Pfam" id="PF00028">
    <property type="entry name" value="Cadherin"/>
    <property type="match status" value="4"/>
</dbReference>
<dbReference type="Pfam" id="PF08758">
    <property type="entry name" value="Cadherin_pro"/>
    <property type="match status" value="1"/>
</dbReference>
<dbReference type="PRINTS" id="PR00205">
    <property type="entry name" value="CADHERIN"/>
</dbReference>
<dbReference type="PRINTS" id="PR01818">
    <property type="entry name" value="DESMOCADHERN"/>
</dbReference>
<dbReference type="PRINTS" id="PR01820">
    <property type="entry name" value="DESMOCOLLIN"/>
</dbReference>
<dbReference type="SMART" id="SM00112">
    <property type="entry name" value="CA"/>
    <property type="match status" value="5"/>
</dbReference>
<dbReference type="SMART" id="SM01055">
    <property type="entry name" value="Cadherin_pro"/>
    <property type="match status" value="1"/>
</dbReference>
<dbReference type="SUPFAM" id="SSF49313">
    <property type="entry name" value="Cadherin-like"/>
    <property type="match status" value="6"/>
</dbReference>
<dbReference type="PROSITE" id="PS00232">
    <property type="entry name" value="CADHERIN_1"/>
    <property type="match status" value="3"/>
</dbReference>
<dbReference type="PROSITE" id="PS50268">
    <property type="entry name" value="CADHERIN_2"/>
    <property type="match status" value="5"/>
</dbReference>
<keyword id="KW-0025">Alternative splicing</keyword>
<keyword id="KW-0106">Calcium</keyword>
<keyword id="KW-0130">Cell adhesion</keyword>
<keyword id="KW-0965">Cell junction</keyword>
<keyword id="KW-1003">Cell membrane</keyword>
<keyword id="KW-0165">Cleavage on pair of basic residues</keyword>
<keyword id="KW-0325">Glycoprotein</keyword>
<keyword id="KW-0472">Membrane</keyword>
<keyword id="KW-0479">Metal-binding</keyword>
<keyword id="KW-0597">Phosphoprotein</keyword>
<keyword id="KW-1185">Reference proteome</keyword>
<keyword id="KW-0677">Repeat</keyword>
<keyword id="KW-0732">Signal</keyword>
<keyword id="KW-0812">Transmembrane</keyword>
<keyword id="KW-1133">Transmembrane helix</keyword>
<comment type="function">
    <text evidence="2 5 7 8">A component of desmosome cell-cell junctions which are required for positive regulation of cellular adhesion (PubMed:33596089). Promotes timely incorporation of DSG2 into desmosome intercellular junctions and promotes interaction of desmosome cell junctions with intermediate filament cytokeratin, via modulation of DSP phosphorylation (By similarity). Plays an important role in desmosome-mediated maintenance of intestinal epithelial cell intercellular adhesion strength and barrier function (PubMed:33596089). Positively regulates wound healing of intestinal mucosa via promotion of epithelial cell migration, and also plays a role in mechanotransduction of force between intestinal epithelial cells and extracellular matrix (PubMed:31967937). May contribute to epidermal cell positioning (stratification) by mediating differential adhesiveness between cells that express different isoforms. May promote p38MAPK signaling activation that facilitates keratinocyte migration (PubMed:26763450).</text>
</comment>
<comment type="subunit">
    <text evidence="2 5">Interacts with DSP, PKP2 and JUP (By similarity). Interacts with DSG3; the interaction may limit the interaction of DSC3 with p38MAPK family members and therefore repress p38MAPK signaling activation (PubMed:26763450).</text>
</comment>
<comment type="subcellular location">
    <subcellularLocation>
        <location evidence="2">Cell membrane</location>
        <topology evidence="2">Single-pass type I membrane protein</topology>
    </subcellularLocation>
    <subcellularLocation>
        <location evidence="9">Cell junction</location>
        <location evidence="9">Desmosome</location>
    </subcellularLocation>
</comment>
<comment type="alternative products">
    <event type="alternative splicing"/>
    <isoform>
        <id>P55292-1</id>
        <name>2A</name>
        <sequence type="displayed"/>
    </isoform>
    <isoform>
        <id>P55292-2</id>
        <name>2B</name>
        <sequence type="described" ref="VSP_000659 VSP_000660"/>
    </isoform>
</comment>
<comment type="tissue specificity">
    <text evidence="7 8 10">Expressed in intestinal epithelial cells (at protein level) (PubMed:31967937, PubMed:33596089, PubMed:7711832). Expressed in the heart (PubMed:33596089). Expressed in tongue, bladder, stomach, liver, kidney, and lung (PubMed:7711832).</text>
</comment>
<comment type="developmental stage">
    <text evidence="6">Expressed in keratinocytes of newborn mice (at protein level).</text>
</comment>
<comment type="domain">
    <text evidence="11">Calcium may be bound by the cadherin-like repeats.</text>
</comment>
<comment type="domain">
    <text evidence="1">Three calcium ions are usually bound at the interface of each cadherin domain and rigidify the connections, imparting a strong curvature to the full-length ectodomain.</text>
</comment>
<comment type="disruption phenotype">
    <text evidence="7 8">In an intestinal epithelial conditional knockout model the width and length of desmosome cell-cell junctions are decreased which in turn increases intermembrane space (PubMed:33596089). Significant increase in paracellular flux in the intestinal ileum (PubMed:33596089). Decreases intestinal epithelium wound healing independent of cell proliferation (PubMed:31967937).</text>
</comment>
<protein>
    <recommendedName>
        <fullName>Desmocollin-2</fullName>
    </recommendedName>
    <alternativeName>
        <fullName>Epithelial type 2 desmocollin</fullName>
    </alternativeName>
</protein>